<keyword id="KW-0227">DNA damage</keyword>
<keyword id="KW-0233">DNA recombination</keyword>
<keyword id="KW-0234">DNA repair</keyword>
<keyword id="KW-0479">Metal-binding</keyword>
<keyword id="KW-1185">Reference proteome</keyword>
<keyword id="KW-0862">Zinc</keyword>
<keyword id="KW-0863">Zinc-finger</keyword>
<proteinExistence type="inferred from homology"/>
<dbReference type="EMBL" id="AE009948">
    <property type="protein sequence ID" value="AAM99653.1"/>
    <property type="molecule type" value="Genomic_DNA"/>
</dbReference>
<dbReference type="RefSeq" id="NP_687781.1">
    <property type="nucleotide sequence ID" value="NC_004116.1"/>
</dbReference>
<dbReference type="RefSeq" id="WP_000966735.1">
    <property type="nucleotide sequence ID" value="NC_004116.1"/>
</dbReference>
<dbReference type="SMR" id="Q8E0G7"/>
<dbReference type="STRING" id="208435.SAG0766"/>
<dbReference type="GeneID" id="66885718"/>
<dbReference type="KEGG" id="sag:SAG0766"/>
<dbReference type="PATRIC" id="fig|208435.3.peg.773"/>
<dbReference type="HOGENOM" id="CLU_060739_1_0_9"/>
<dbReference type="OrthoDB" id="9802672at2"/>
<dbReference type="Proteomes" id="UP000000821">
    <property type="component" value="Chromosome"/>
</dbReference>
<dbReference type="GO" id="GO:0003677">
    <property type="term" value="F:DNA binding"/>
    <property type="evidence" value="ECO:0007669"/>
    <property type="project" value="UniProtKB-UniRule"/>
</dbReference>
<dbReference type="GO" id="GO:0008270">
    <property type="term" value="F:zinc ion binding"/>
    <property type="evidence" value="ECO:0007669"/>
    <property type="project" value="UniProtKB-KW"/>
</dbReference>
<dbReference type="GO" id="GO:0006310">
    <property type="term" value="P:DNA recombination"/>
    <property type="evidence" value="ECO:0007669"/>
    <property type="project" value="UniProtKB-UniRule"/>
</dbReference>
<dbReference type="GO" id="GO:0006281">
    <property type="term" value="P:DNA repair"/>
    <property type="evidence" value="ECO:0007669"/>
    <property type="project" value="UniProtKB-UniRule"/>
</dbReference>
<dbReference type="CDD" id="cd01025">
    <property type="entry name" value="TOPRIM_recR"/>
    <property type="match status" value="1"/>
</dbReference>
<dbReference type="Gene3D" id="3.30.60.80">
    <property type="match status" value="1"/>
</dbReference>
<dbReference type="Gene3D" id="3.40.1360.10">
    <property type="match status" value="1"/>
</dbReference>
<dbReference type="Gene3D" id="6.10.250.240">
    <property type="match status" value="1"/>
</dbReference>
<dbReference type="Gene3D" id="1.10.8.420">
    <property type="entry name" value="RecR Domain 1"/>
    <property type="match status" value="1"/>
</dbReference>
<dbReference type="HAMAP" id="MF_00017">
    <property type="entry name" value="RecR"/>
    <property type="match status" value="1"/>
</dbReference>
<dbReference type="InterPro" id="IPR000093">
    <property type="entry name" value="DNA_Rcmb_RecR"/>
</dbReference>
<dbReference type="InterPro" id="IPR023627">
    <property type="entry name" value="Rcmb_RecR"/>
</dbReference>
<dbReference type="InterPro" id="IPR015967">
    <property type="entry name" value="Rcmb_RecR_Znf"/>
</dbReference>
<dbReference type="InterPro" id="IPR006171">
    <property type="entry name" value="TOPRIM_dom"/>
</dbReference>
<dbReference type="InterPro" id="IPR034137">
    <property type="entry name" value="TOPRIM_RecR"/>
</dbReference>
<dbReference type="NCBIfam" id="TIGR00615">
    <property type="entry name" value="recR"/>
    <property type="match status" value="1"/>
</dbReference>
<dbReference type="PANTHER" id="PTHR30446">
    <property type="entry name" value="RECOMBINATION PROTEIN RECR"/>
    <property type="match status" value="1"/>
</dbReference>
<dbReference type="PANTHER" id="PTHR30446:SF0">
    <property type="entry name" value="RECOMBINATION PROTEIN RECR"/>
    <property type="match status" value="1"/>
</dbReference>
<dbReference type="Pfam" id="PF21175">
    <property type="entry name" value="RecR_C"/>
    <property type="match status" value="1"/>
</dbReference>
<dbReference type="Pfam" id="PF21176">
    <property type="entry name" value="RecR_HhH"/>
    <property type="match status" value="1"/>
</dbReference>
<dbReference type="Pfam" id="PF02132">
    <property type="entry name" value="RecR_ZnF"/>
    <property type="match status" value="1"/>
</dbReference>
<dbReference type="Pfam" id="PF13662">
    <property type="entry name" value="Toprim_4"/>
    <property type="match status" value="1"/>
</dbReference>
<dbReference type="SMART" id="SM00493">
    <property type="entry name" value="TOPRIM"/>
    <property type="match status" value="1"/>
</dbReference>
<dbReference type="SUPFAM" id="SSF111304">
    <property type="entry name" value="Recombination protein RecR"/>
    <property type="match status" value="1"/>
</dbReference>
<dbReference type="PROSITE" id="PS01300">
    <property type="entry name" value="RECR"/>
    <property type="match status" value="1"/>
</dbReference>
<dbReference type="PROSITE" id="PS50880">
    <property type="entry name" value="TOPRIM"/>
    <property type="match status" value="1"/>
</dbReference>
<organism>
    <name type="scientific">Streptococcus agalactiae serotype V (strain ATCC BAA-611 / 2603 V/R)</name>
    <dbReference type="NCBI Taxonomy" id="208435"/>
    <lineage>
        <taxon>Bacteria</taxon>
        <taxon>Bacillati</taxon>
        <taxon>Bacillota</taxon>
        <taxon>Bacilli</taxon>
        <taxon>Lactobacillales</taxon>
        <taxon>Streptococcaceae</taxon>
        <taxon>Streptococcus</taxon>
    </lineage>
</organism>
<evidence type="ECO:0000255" key="1">
    <source>
        <dbReference type="HAMAP-Rule" id="MF_00017"/>
    </source>
</evidence>
<protein>
    <recommendedName>
        <fullName evidence="1">Recombination protein RecR</fullName>
    </recommendedName>
</protein>
<name>RECR_STRA5</name>
<comment type="function">
    <text evidence="1">May play a role in DNA repair. It seems to be involved in an RecBC-independent recombinational process of DNA repair. It may act with RecF and RecO.</text>
</comment>
<comment type="similarity">
    <text evidence="1">Belongs to the RecR family.</text>
</comment>
<accession>Q8E0G7</accession>
<sequence length="198" mass="21620">MLYPTPIAKLIDSFSKLPGIGTKTATRLAFYTIGMSDEDVNEFAKNLLAAKRELTYCSVCGNLTDDDPCLICTDKTRDQSVILVVEDSKDVSAMEKIQEYNGLYHVLHGLISPMNGISPDDINLKSLITRLMDGQVTEVIVATNATADGEATSMYISRVLKPAGIKVTRLARGLAVGSDIEYADEVTLLRAIENRTEL</sequence>
<feature type="chain" id="PRO_0000190394" description="Recombination protein RecR">
    <location>
        <begin position="1"/>
        <end position="198"/>
    </location>
</feature>
<feature type="domain" description="Toprim" evidence="1">
    <location>
        <begin position="80"/>
        <end position="175"/>
    </location>
</feature>
<feature type="zinc finger region" description="C4-type" evidence="1">
    <location>
        <begin position="57"/>
        <end position="72"/>
    </location>
</feature>
<reference key="1">
    <citation type="journal article" date="2002" name="Proc. Natl. Acad. Sci. U.S.A.">
        <title>Complete genome sequence and comparative genomic analysis of an emerging human pathogen, serotype V Streptococcus agalactiae.</title>
        <authorList>
            <person name="Tettelin H."/>
            <person name="Masignani V."/>
            <person name="Cieslewicz M.J."/>
            <person name="Eisen J.A."/>
            <person name="Peterson S.N."/>
            <person name="Wessels M.R."/>
            <person name="Paulsen I.T."/>
            <person name="Nelson K.E."/>
            <person name="Margarit I."/>
            <person name="Read T.D."/>
            <person name="Madoff L.C."/>
            <person name="Wolf A.M."/>
            <person name="Beanan M.J."/>
            <person name="Brinkac L.M."/>
            <person name="Daugherty S.C."/>
            <person name="DeBoy R.T."/>
            <person name="Durkin A.S."/>
            <person name="Kolonay J.F."/>
            <person name="Madupu R."/>
            <person name="Lewis M.R."/>
            <person name="Radune D."/>
            <person name="Fedorova N.B."/>
            <person name="Scanlan D."/>
            <person name="Khouri H.M."/>
            <person name="Mulligan S."/>
            <person name="Carty H.A."/>
            <person name="Cline R.T."/>
            <person name="Van Aken S.E."/>
            <person name="Gill J."/>
            <person name="Scarselli M."/>
            <person name="Mora M."/>
            <person name="Iacobini E.T."/>
            <person name="Brettoni C."/>
            <person name="Galli G."/>
            <person name="Mariani M."/>
            <person name="Vegni F."/>
            <person name="Maione D."/>
            <person name="Rinaudo D."/>
            <person name="Rappuoli R."/>
            <person name="Telford J.L."/>
            <person name="Kasper D.L."/>
            <person name="Grandi G."/>
            <person name="Fraser C.M."/>
        </authorList>
    </citation>
    <scope>NUCLEOTIDE SEQUENCE [LARGE SCALE GENOMIC DNA]</scope>
    <source>
        <strain>ATCC BAA-611 / 2603 V/R</strain>
    </source>
</reference>
<gene>
    <name evidence="1" type="primary">recR</name>
    <name type="ordered locus">SAG0766</name>
</gene>